<dbReference type="EMBL" id="Z72742">
    <property type="protein sequence ID" value="CAA96936.1"/>
    <property type="molecule type" value="Genomic_DNA"/>
</dbReference>
<dbReference type="EMBL" id="AY558390">
    <property type="protein sequence ID" value="AAS56716.1"/>
    <property type="molecule type" value="Genomic_DNA"/>
</dbReference>
<dbReference type="EMBL" id="BK006941">
    <property type="protein sequence ID" value="DAA07899.1"/>
    <property type="molecule type" value="Genomic_DNA"/>
</dbReference>
<dbReference type="PIR" id="S64242">
    <property type="entry name" value="S64242"/>
</dbReference>
<dbReference type="RefSeq" id="NP_011295.1">
    <property type="nucleotide sequence ID" value="NM_001181085.1"/>
</dbReference>
<dbReference type="PDB" id="5Y4B">
    <property type="method" value="NMR"/>
    <property type="chains" value="A=36-120"/>
</dbReference>
<dbReference type="PDBsum" id="5Y4B"/>
<dbReference type="SMR" id="P53082"/>
<dbReference type="BioGRID" id="33039">
    <property type="interactions" value="58"/>
</dbReference>
<dbReference type="ComplexPortal" id="CPX-6864">
    <property type="entry name" value="BOL2-GRX3 iron-sulfur cluster assembly complex"/>
</dbReference>
<dbReference type="ComplexPortal" id="CPX-6865">
    <property type="entry name" value="BOL2-GRX4 iron-sulfur cluster assembly complex"/>
</dbReference>
<dbReference type="DIP" id="DIP-2048N"/>
<dbReference type="FunCoup" id="P53082">
    <property type="interactions" value="363"/>
</dbReference>
<dbReference type="IntAct" id="P53082">
    <property type="interactions" value="9"/>
</dbReference>
<dbReference type="MINT" id="P53082"/>
<dbReference type="STRING" id="4932.YGL220W"/>
<dbReference type="PaxDb" id="4932-YGL220W"/>
<dbReference type="PeptideAtlas" id="P53082"/>
<dbReference type="EnsemblFungi" id="YGL220W_mRNA">
    <property type="protein sequence ID" value="YGL220W"/>
    <property type="gene ID" value="YGL220W"/>
</dbReference>
<dbReference type="GeneID" id="852652"/>
<dbReference type="KEGG" id="sce:YGL220W"/>
<dbReference type="AGR" id="SGD:S000003188"/>
<dbReference type="SGD" id="S000003188">
    <property type="gene designation" value="BOL2"/>
</dbReference>
<dbReference type="VEuPathDB" id="FungiDB:YGL220W"/>
<dbReference type="eggNOG" id="KOG3348">
    <property type="taxonomic scope" value="Eukaryota"/>
</dbReference>
<dbReference type="GeneTree" id="ENSGT00510000047760"/>
<dbReference type="HOGENOM" id="CLU_109462_4_0_1"/>
<dbReference type="InParanoid" id="P53082"/>
<dbReference type="OMA" id="VHAFSQK"/>
<dbReference type="OrthoDB" id="4983at2759"/>
<dbReference type="BioCyc" id="YEAST:G3O-30694-MONOMER"/>
<dbReference type="BioGRID-ORCS" id="852652">
    <property type="hits" value="5 hits in 10 CRISPR screens"/>
</dbReference>
<dbReference type="PRO" id="PR:P53082"/>
<dbReference type="Proteomes" id="UP000002311">
    <property type="component" value="Chromosome VII"/>
</dbReference>
<dbReference type="RNAct" id="P53082">
    <property type="molecule type" value="protein"/>
</dbReference>
<dbReference type="GO" id="GO:0005737">
    <property type="term" value="C:cytoplasm"/>
    <property type="evidence" value="ECO:0007005"/>
    <property type="project" value="SGD"/>
</dbReference>
<dbReference type="GO" id="GO:0005829">
    <property type="term" value="C:cytosol"/>
    <property type="evidence" value="ECO:0000314"/>
    <property type="project" value="SGD"/>
</dbReference>
<dbReference type="GO" id="GO:1990229">
    <property type="term" value="C:iron-sulfur cluster assembly complex"/>
    <property type="evidence" value="ECO:0000353"/>
    <property type="project" value="ComplexPortal"/>
</dbReference>
<dbReference type="GO" id="GO:0005634">
    <property type="term" value="C:nucleus"/>
    <property type="evidence" value="ECO:0007005"/>
    <property type="project" value="SGD"/>
</dbReference>
<dbReference type="GO" id="GO:0051537">
    <property type="term" value="F:2 iron, 2 sulfur cluster binding"/>
    <property type="evidence" value="ECO:0007669"/>
    <property type="project" value="InterPro"/>
</dbReference>
<dbReference type="GO" id="GO:0051536">
    <property type="term" value="F:iron-sulfur cluster binding"/>
    <property type="evidence" value="ECO:0000314"/>
    <property type="project" value="SGD"/>
</dbReference>
<dbReference type="GO" id="GO:0071281">
    <property type="term" value="P:cellular response to iron ion"/>
    <property type="evidence" value="ECO:0000315"/>
    <property type="project" value="SGD"/>
</dbReference>
<dbReference type="GO" id="GO:0006879">
    <property type="term" value="P:intracellular iron ion homeostasis"/>
    <property type="evidence" value="ECO:0000318"/>
    <property type="project" value="GO_Central"/>
</dbReference>
<dbReference type="GO" id="GO:0016226">
    <property type="term" value="P:iron-sulfur cluster assembly"/>
    <property type="evidence" value="ECO:0000303"/>
    <property type="project" value="ComplexPortal"/>
</dbReference>
<dbReference type="GO" id="GO:0000122">
    <property type="term" value="P:negative regulation of transcription by RNA polymerase II"/>
    <property type="evidence" value="ECO:0000315"/>
    <property type="project" value="SGD"/>
</dbReference>
<dbReference type="GO" id="GO:0051604">
    <property type="term" value="P:protein maturation"/>
    <property type="evidence" value="ECO:0007669"/>
    <property type="project" value="InterPro"/>
</dbReference>
<dbReference type="FunFam" id="3.10.20.90:FF:000449">
    <property type="entry name" value="Fra2p"/>
    <property type="match status" value="1"/>
</dbReference>
<dbReference type="Gene3D" id="3.10.20.90">
    <property type="entry name" value="Phosphatidylinositol 3-kinase Catalytic Subunit, Chain A, domain 1"/>
    <property type="match status" value="1"/>
</dbReference>
<dbReference type="InterPro" id="IPR045115">
    <property type="entry name" value="BOL2"/>
</dbReference>
<dbReference type="InterPro" id="IPR002634">
    <property type="entry name" value="BolA"/>
</dbReference>
<dbReference type="InterPro" id="IPR036065">
    <property type="entry name" value="BolA-like_sf"/>
</dbReference>
<dbReference type="PANTHER" id="PTHR12735:SF27">
    <property type="entry name" value="BOLA-LIKE PROTEIN 2"/>
    <property type="match status" value="1"/>
</dbReference>
<dbReference type="PANTHER" id="PTHR12735">
    <property type="entry name" value="BOLA-LIKE PROTEIN-RELATED"/>
    <property type="match status" value="1"/>
</dbReference>
<dbReference type="Pfam" id="PF01722">
    <property type="entry name" value="BolA"/>
    <property type="match status" value="1"/>
</dbReference>
<dbReference type="PIRSF" id="PIRSF003113">
    <property type="entry name" value="BolA"/>
    <property type="match status" value="1"/>
</dbReference>
<dbReference type="SUPFAM" id="SSF82657">
    <property type="entry name" value="BolA-like"/>
    <property type="match status" value="1"/>
</dbReference>
<keyword id="KW-0002">3D-structure</keyword>
<keyword id="KW-0963">Cytoplasm</keyword>
<keyword id="KW-0539">Nucleus</keyword>
<keyword id="KW-1185">Reference proteome</keyword>
<evidence type="ECO:0000269" key="1">
    <source>
    </source>
</evidence>
<evidence type="ECO:0000269" key="2">
    <source>
    </source>
</evidence>
<evidence type="ECO:0000269" key="3">
    <source>
    </source>
</evidence>
<evidence type="ECO:0000305" key="4"/>
<evidence type="ECO:0007829" key="5">
    <source>
        <dbReference type="PDB" id="5Y4B"/>
    </source>
</evidence>
<comment type="function">
    <text evidence="2 3">Involved in the regulation of the iron regulon in response to decreased mitochondrial iron-sulfur cluster synthesis. May be involved in mitochondrial organization and biogenesis.</text>
</comment>
<comment type="subunit">
    <text evidence="2">Interacts with FRA1, GRX3 and GRX4.</text>
</comment>
<comment type="interaction">
    <interactant intactId="EBI-24159">
        <id>P53082</id>
    </interactant>
    <interactant intactId="EBI-22178">
        <id>Q03835</id>
        <label>GRX3</label>
    </interactant>
    <organismsDiffer>false</organismsDiffer>
    <experiments>3</experiments>
</comment>
<comment type="subcellular location">
    <subcellularLocation>
        <location>Cytoplasm</location>
    </subcellularLocation>
    <subcellularLocation>
        <location>Nucleus</location>
    </subcellularLocation>
</comment>
<comment type="miscellaneous">
    <text evidence="1">Present with 2050 molecules/cell in log phase SD medium.</text>
</comment>
<comment type="similarity">
    <text evidence="4">Belongs to the BolA/IbaG family.</text>
</comment>
<feature type="chain" id="PRO_0000201232" description="BolA-like protein 2">
    <location>
        <begin position="1"/>
        <end position="120"/>
    </location>
</feature>
<feature type="helix" evidence="5">
    <location>
        <begin position="40"/>
        <end position="50"/>
    </location>
</feature>
<feature type="strand" evidence="5">
    <location>
        <begin position="55"/>
        <end position="60"/>
    </location>
</feature>
<feature type="strand" evidence="5">
    <location>
        <begin position="62"/>
        <end position="66"/>
    </location>
</feature>
<feature type="strand" evidence="5">
    <location>
        <begin position="68"/>
        <end position="75"/>
    </location>
</feature>
<feature type="helix" evidence="5">
    <location>
        <begin position="77"/>
        <end position="79"/>
    </location>
</feature>
<feature type="helix" evidence="5">
    <location>
        <begin position="84"/>
        <end position="94"/>
    </location>
</feature>
<feature type="helix" evidence="5">
    <location>
        <begin position="96"/>
        <end position="101"/>
    </location>
</feature>
<feature type="strand" evidence="5">
    <location>
        <begin position="103"/>
        <end position="109"/>
    </location>
</feature>
<feature type="turn" evidence="5">
    <location>
        <begin position="113"/>
        <end position="115"/>
    </location>
</feature>
<organism>
    <name type="scientific">Saccharomyces cerevisiae (strain ATCC 204508 / S288c)</name>
    <name type="common">Baker's yeast</name>
    <dbReference type="NCBI Taxonomy" id="559292"/>
    <lineage>
        <taxon>Eukaryota</taxon>
        <taxon>Fungi</taxon>
        <taxon>Dikarya</taxon>
        <taxon>Ascomycota</taxon>
        <taxon>Saccharomycotina</taxon>
        <taxon>Saccharomycetes</taxon>
        <taxon>Saccharomycetales</taxon>
        <taxon>Saccharomycetaceae</taxon>
        <taxon>Saccharomyces</taxon>
    </lineage>
</organism>
<proteinExistence type="evidence at protein level"/>
<reference key="1">
    <citation type="journal article" date="1997" name="Yeast">
        <title>Sequence analysis of 203 kilobases from Saccharomyces cerevisiae chromosome VII.</title>
        <authorList>
            <person name="Rieger M."/>
            <person name="Brueckner M."/>
            <person name="Schaefer M."/>
            <person name="Mueller-Auer S."/>
        </authorList>
    </citation>
    <scope>NUCLEOTIDE SEQUENCE [GENOMIC DNA]</scope>
    <source>
        <strain>ATCC 204508 / S288c</strain>
    </source>
</reference>
<reference key="2">
    <citation type="journal article" date="1997" name="Nature">
        <title>The nucleotide sequence of Saccharomyces cerevisiae chromosome VII.</title>
        <authorList>
            <person name="Tettelin H."/>
            <person name="Agostoni-Carbone M.L."/>
            <person name="Albermann K."/>
            <person name="Albers M."/>
            <person name="Arroyo J."/>
            <person name="Backes U."/>
            <person name="Barreiros T."/>
            <person name="Bertani I."/>
            <person name="Bjourson A.J."/>
            <person name="Brueckner M."/>
            <person name="Bruschi C.V."/>
            <person name="Carignani G."/>
            <person name="Castagnoli L."/>
            <person name="Cerdan E."/>
            <person name="Clemente M.L."/>
            <person name="Coblenz A."/>
            <person name="Coglievina M."/>
            <person name="Coissac E."/>
            <person name="Defoor E."/>
            <person name="Del Bino S."/>
            <person name="Delius H."/>
            <person name="Delneri D."/>
            <person name="de Wergifosse P."/>
            <person name="Dujon B."/>
            <person name="Durand P."/>
            <person name="Entian K.-D."/>
            <person name="Eraso P."/>
            <person name="Escribano V."/>
            <person name="Fabiani L."/>
            <person name="Fartmann B."/>
            <person name="Feroli F."/>
            <person name="Feuermann M."/>
            <person name="Frontali L."/>
            <person name="Garcia-Gonzalez M."/>
            <person name="Garcia-Saez M.I."/>
            <person name="Goffeau A."/>
            <person name="Guerreiro P."/>
            <person name="Hani J."/>
            <person name="Hansen M."/>
            <person name="Hebling U."/>
            <person name="Hernandez K."/>
            <person name="Heumann K."/>
            <person name="Hilger F."/>
            <person name="Hofmann B."/>
            <person name="Indge K.J."/>
            <person name="James C.M."/>
            <person name="Klima R."/>
            <person name="Koetter P."/>
            <person name="Kramer B."/>
            <person name="Kramer W."/>
            <person name="Lauquin G."/>
            <person name="Leuther H."/>
            <person name="Louis E.J."/>
            <person name="Maillier E."/>
            <person name="Marconi A."/>
            <person name="Martegani E."/>
            <person name="Mazon M.J."/>
            <person name="Mazzoni C."/>
            <person name="McReynolds A.D.K."/>
            <person name="Melchioretto P."/>
            <person name="Mewes H.-W."/>
            <person name="Minenkova O."/>
            <person name="Mueller-Auer S."/>
            <person name="Nawrocki A."/>
            <person name="Netter P."/>
            <person name="Neu R."/>
            <person name="Nombela C."/>
            <person name="Oliver S.G."/>
            <person name="Panzeri L."/>
            <person name="Paoluzi S."/>
            <person name="Plevani P."/>
            <person name="Portetelle D."/>
            <person name="Portillo F."/>
            <person name="Potier S."/>
            <person name="Purnelle B."/>
            <person name="Rieger M."/>
            <person name="Riles L."/>
            <person name="Rinaldi T."/>
            <person name="Robben J."/>
            <person name="Rodrigues-Pousada C."/>
            <person name="Rodriguez-Belmonte E."/>
            <person name="Rodriguez-Torres A.M."/>
            <person name="Rose M."/>
            <person name="Ruzzi M."/>
            <person name="Saliola M."/>
            <person name="Sanchez-Perez M."/>
            <person name="Schaefer B."/>
            <person name="Schaefer M."/>
            <person name="Scharfe M."/>
            <person name="Schmidheini T."/>
            <person name="Schreer A."/>
            <person name="Skala J."/>
            <person name="Souciet J.-L."/>
            <person name="Steensma H.Y."/>
            <person name="Talla E."/>
            <person name="Thierry A."/>
            <person name="Vandenbol M."/>
            <person name="van der Aart Q.J.M."/>
            <person name="Van Dyck L."/>
            <person name="Vanoni M."/>
            <person name="Verhasselt P."/>
            <person name="Voet M."/>
            <person name="Volckaert G."/>
            <person name="Wambutt R."/>
            <person name="Watson M.D."/>
            <person name="Weber N."/>
            <person name="Wedler E."/>
            <person name="Wedler H."/>
            <person name="Wipfli P."/>
            <person name="Wolf K."/>
            <person name="Wright L.F."/>
            <person name="Zaccaria P."/>
            <person name="Zimmermann M."/>
            <person name="Zollner A."/>
            <person name="Kleine K."/>
        </authorList>
    </citation>
    <scope>NUCLEOTIDE SEQUENCE [LARGE SCALE GENOMIC DNA]</scope>
    <source>
        <strain>ATCC 204508 / S288c</strain>
    </source>
</reference>
<reference key="3">
    <citation type="journal article" date="2014" name="G3 (Bethesda)">
        <title>The reference genome sequence of Saccharomyces cerevisiae: Then and now.</title>
        <authorList>
            <person name="Engel S.R."/>
            <person name="Dietrich F.S."/>
            <person name="Fisk D.G."/>
            <person name="Binkley G."/>
            <person name="Balakrishnan R."/>
            <person name="Costanzo M.C."/>
            <person name="Dwight S.S."/>
            <person name="Hitz B.C."/>
            <person name="Karra K."/>
            <person name="Nash R.S."/>
            <person name="Weng S."/>
            <person name="Wong E.D."/>
            <person name="Lloyd P."/>
            <person name="Skrzypek M.S."/>
            <person name="Miyasato S.R."/>
            <person name="Simison M."/>
            <person name="Cherry J.M."/>
        </authorList>
    </citation>
    <scope>GENOME REANNOTATION</scope>
    <source>
        <strain>ATCC 204508 / S288c</strain>
    </source>
</reference>
<reference key="4">
    <citation type="journal article" date="2007" name="Genome Res.">
        <title>Approaching a complete repository of sequence-verified protein-encoding clones for Saccharomyces cerevisiae.</title>
        <authorList>
            <person name="Hu Y."/>
            <person name="Rolfs A."/>
            <person name="Bhullar B."/>
            <person name="Murthy T.V.S."/>
            <person name="Zhu C."/>
            <person name="Berger M.F."/>
            <person name="Camargo A.A."/>
            <person name="Kelley F."/>
            <person name="McCarron S."/>
            <person name="Jepson D."/>
            <person name="Richardson A."/>
            <person name="Raphael J."/>
            <person name="Moreira D."/>
            <person name="Taycher E."/>
            <person name="Zuo D."/>
            <person name="Mohr S."/>
            <person name="Kane M.F."/>
            <person name="Williamson J."/>
            <person name="Simpson A.J.G."/>
            <person name="Bulyk M.L."/>
            <person name="Harlow E."/>
            <person name="Marsischky G."/>
            <person name="Kolodner R.D."/>
            <person name="LaBaer J."/>
        </authorList>
    </citation>
    <scope>NUCLEOTIDE SEQUENCE [GENOMIC DNA]</scope>
    <source>
        <strain>ATCC 204508 / S288c</strain>
    </source>
</reference>
<reference key="5">
    <citation type="journal article" date="2003" name="Nature">
        <title>Global analysis of protein localization in budding yeast.</title>
        <authorList>
            <person name="Huh W.-K."/>
            <person name="Falvo J.V."/>
            <person name="Gerke L.C."/>
            <person name="Carroll A.S."/>
            <person name="Howson R.W."/>
            <person name="Weissman J.S."/>
            <person name="O'Shea E.K."/>
        </authorList>
    </citation>
    <scope>SUBCELLULAR LOCATION [LARGE SCALE ANALYSIS]</scope>
</reference>
<reference key="6">
    <citation type="journal article" date="2003" name="Nature">
        <title>Global analysis of protein expression in yeast.</title>
        <authorList>
            <person name="Ghaemmaghami S."/>
            <person name="Huh W.-K."/>
            <person name="Bower K."/>
            <person name="Howson R.W."/>
            <person name="Belle A."/>
            <person name="Dephoure N."/>
            <person name="O'Shea E.K."/>
            <person name="Weissman J.S."/>
        </authorList>
    </citation>
    <scope>LEVEL OF PROTEIN EXPRESSION [LARGE SCALE ANALYSIS]</scope>
</reference>
<reference key="7">
    <citation type="journal article" date="2008" name="J. Biol. Chem.">
        <title>Identification of FRA1 and FRA2 as genes involved in regulating the yeast iron regulon in response to decreased mitochondrial iron-sulfur cluster synthesis.</title>
        <authorList>
            <person name="Kumanovics A."/>
            <person name="Chen O.S."/>
            <person name="Li L."/>
            <person name="Bagley D."/>
            <person name="Adkins E.M."/>
            <person name="Lin H."/>
            <person name="Dingra N.N."/>
            <person name="Outten C.E."/>
            <person name="Keller G."/>
            <person name="Winge D."/>
            <person name="Ward D.M."/>
            <person name="Kaplan J."/>
        </authorList>
    </citation>
    <scope>FUNCTION</scope>
    <scope>SUBCELLULAR LOCATION</scope>
    <scope>INTERACTION WITH FRA1; GRX3 AND GRX4</scope>
</reference>
<reference key="8">
    <citation type="journal article" date="2009" name="PLoS Genet.">
        <title>Computationally driven, quantitative experiments discover genes required for mitochondrial biogenesis.</title>
        <authorList>
            <person name="Hess D.C."/>
            <person name="Myers C.L."/>
            <person name="Huttenhower C."/>
            <person name="Hibbs M.A."/>
            <person name="Hayes A.P."/>
            <person name="Paw J."/>
            <person name="Clore J.J."/>
            <person name="Mendoza R.M."/>
            <person name="Luis B.S."/>
            <person name="Nislow C."/>
            <person name="Giaever G."/>
            <person name="Costanzo M."/>
            <person name="Troyanskaya O.G."/>
            <person name="Caudy A.A."/>
        </authorList>
    </citation>
    <scope>FUNCTION</scope>
</reference>
<gene>
    <name type="primary">BOL2</name>
    <name type="synonym">AIM15</name>
    <name type="synonym">FRA2</name>
    <name type="ordered locus">YGL220W</name>
</gene>
<name>BOL2_YEAST</name>
<protein>
    <recommendedName>
        <fullName>BolA-like protein 2</fullName>
    </recommendedName>
    <alternativeName>
        <fullName>Altered inheritance rate of mitochondria protein 15</fullName>
    </alternativeName>
    <alternativeName>
        <fullName>Fe repressor of activation 2</fullName>
    </alternativeName>
</protein>
<sequence length="120" mass="14102">MTGERIEKVKINDEFAKSHFLTTQWRETKRQRHYKMPVTEQGLRERIESAIPQVYHIIVTDLSYGCGQSFDIVVVSDFFQGKSKLMRSRAVNKAVKEELQEIHAFSCKCYTEEEWSKIVV</sequence>
<accession>P53082</accession>
<accession>D6VVB5</accession>